<dbReference type="EC" id="3.5.1.44" evidence="1"/>
<dbReference type="EMBL" id="CP000232">
    <property type="protein sequence ID" value="ABC19118.1"/>
    <property type="molecule type" value="Genomic_DNA"/>
</dbReference>
<dbReference type="RefSeq" id="YP_429661.1">
    <property type="nucleotide sequence ID" value="NC_007644.1"/>
</dbReference>
<dbReference type="SMR" id="Q2RKC1"/>
<dbReference type="STRING" id="264732.Moth_0800"/>
<dbReference type="EnsemblBacteria" id="ABC19118">
    <property type="protein sequence ID" value="ABC19118"/>
    <property type="gene ID" value="Moth_0800"/>
</dbReference>
<dbReference type="KEGG" id="mta:Moth_0800"/>
<dbReference type="PATRIC" id="fig|264732.11.peg.859"/>
<dbReference type="eggNOG" id="COG1871">
    <property type="taxonomic scope" value="Bacteria"/>
</dbReference>
<dbReference type="HOGENOM" id="CLU_087854_2_0_9"/>
<dbReference type="OrthoDB" id="9807202at2"/>
<dbReference type="GO" id="GO:0050568">
    <property type="term" value="F:protein-glutamine glutaminase activity"/>
    <property type="evidence" value="ECO:0007669"/>
    <property type="project" value="UniProtKB-UniRule"/>
</dbReference>
<dbReference type="GO" id="GO:0006935">
    <property type="term" value="P:chemotaxis"/>
    <property type="evidence" value="ECO:0007669"/>
    <property type="project" value="UniProtKB-UniRule"/>
</dbReference>
<dbReference type="CDD" id="cd16352">
    <property type="entry name" value="CheD"/>
    <property type="match status" value="1"/>
</dbReference>
<dbReference type="Gene3D" id="3.30.1330.200">
    <property type="match status" value="1"/>
</dbReference>
<dbReference type="HAMAP" id="MF_01440">
    <property type="entry name" value="CheD"/>
    <property type="match status" value="1"/>
</dbReference>
<dbReference type="InterPro" id="IPR038592">
    <property type="entry name" value="CheD-like_sf"/>
</dbReference>
<dbReference type="InterPro" id="IPR005659">
    <property type="entry name" value="Chemorcpt_Glu_NH3ase_CheD"/>
</dbReference>
<dbReference type="InterPro" id="IPR011324">
    <property type="entry name" value="Cytotoxic_necrot_fac-like_cat"/>
</dbReference>
<dbReference type="PANTHER" id="PTHR35147">
    <property type="entry name" value="CHEMORECEPTOR GLUTAMINE DEAMIDASE CHED-RELATED"/>
    <property type="match status" value="1"/>
</dbReference>
<dbReference type="PANTHER" id="PTHR35147:SF1">
    <property type="entry name" value="CHEMORECEPTOR GLUTAMINE DEAMIDASE CHED-RELATED"/>
    <property type="match status" value="1"/>
</dbReference>
<dbReference type="Pfam" id="PF03975">
    <property type="entry name" value="CheD"/>
    <property type="match status" value="1"/>
</dbReference>
<dbReference type="SUPFAM" id="SSF64438">
    <property type="entry name" value="CNF1/YfiH-like putative cysteine hydrolases"/>
    <property type="match status" value="1"/>
</dbReference>
<organism>
    <name type="scientific">Moorella thermoacetica (strain ATCC 39073 / JCM 9320)</name>
    <dbReference type="NCBI Taxonomy" id="264732"/>
    <lineage>
        <taxon>Bacteria</taxon>
        <taxon>Bacillati</taxon>
        <taxon>Bacillota</taxon>
        <taxon>Clostridia</taxon>
        <taxon>Moorellales</taxon>
        <taxon>Moorellaceae</taxon>
        <taxon>Moorella</taxon>
    </lineage>
</organism>
<feature type="chain" id="PRO_0000251045" description="Probable chemoreceptor glutamine deamidase CheD">
    <location>
        <begin position="1"/>
        <end position="167"/>
    </location>
</feature>
<comment type="function">
    <text evidence="1">Probably deamidates glutamine residues to glutamate on methyl-accepting chemotaxis receptors (MCPs), playing an important role in chemotaxis.</text>
</comment>
<comment type="catalytic activity">
    <reaction evidence="1">
        <text>L-glutaminyl-[protein] + H2O = L-glutamyl-[protein] + NH4(+)</text>
        <dbReference type="Rhea" id="RHEA:16441"/>
        <dbReference type="Rhea" id="RHEA-COMP:10207"/>
        <dbReference type="Rhea" id="RHEA-COMP:10208"/>
        <dbReference type="ChEBI" id="CHEBI:15377"/>
        <dbReference type="ChEBI" id="CHEBI:28938"/>
        <dbReference type="ChEBI" id="CHEBI:29973"/>
        <dbReference type="ChEBI" id="CHEBI:30011"/>
        <dbReference type="EC" id="3.5.1.44"/>
    </reaction>
</comment>
<comment type="similarity">
    <text evidence="1">Belongs to the CheD family.</text>
</comment>
<proteinExistence type="inferred from homology"/>
<reference key="1">
    <citation type="journal article" date="2008" name="Environ. Microbiol.">
        <title>The complete genome sequence of Moorella thermoacetica (f. Clostridium thermoaceticum).</title>
        <authorList>
            <person name="Pierce E."/>
            <person name="Xie G."/>
            <person name="Barabote R.D."/>
            <person name="Saunders E."/>
            <person name="Han C.S."/>
            <person name="Detter J.C."/>
            <person name="Richardson P."/>
            <person name="Brettin T.S."/>
            <person name="Das A."/>
            <person name="Ljungdahl L.G."/>
            <person name="Ragsdale S.W."/>
        </authorList>
    </citation>
    <scope>NUCLEOTIDE SEQUENCE [LARGE SCALE GENOMIC DNA]</scope>
    <source>
        <strain>ATCC 39073 / JCM 9320</strain>
    </source>
</reference>
<gene>
    <name evidence="1" type="primary">cheD</name>
    <name type="ordered locus">Moth_0800</name>
</gene>
<protein>
    <recommendedName>
        <fullName evidence="1">Probable chemoreceptor glutamine deamidase CheD</fullName>
        <ecNumber evidence="1">3.5.1.44</ecNumber>
    </recommendedName>
</protein>
<accession>Q2RKC1</accession>
<keyword id="KW-0145">Chemotaxis</keyword>
<keyword id="KW-0378">Hydrolase</keyword>
<evidence type="ECO:0000255" key="1">
    <source>
        <dbReference type="HAMAP-Rule" id="MF_01440"/>
    </source>
</evidence>
<sequence length="167" mass="18004">MEAIIKPQEVKVGIAEWQVLRAPGRLITLGLGSCVGIALYDSLNRMGGLAHIMLPDSSQFQDRSNRAKFADLAILDLVAALIGRGARRGRLVAKIAGGAQMFTSGDRHLSLLNIGQRNAAMVRQTLQELAIPLVAEDTGGNYGRTMIFDLESGDVLIRTIGRPLKVI</sequence>
<name>CHED_MOOTA</name>